<comment type="function">
    <text evidence="2">Structural protein, a component of a tail fiber.</text>
</comment>
<comment type="subcellular location">
    <subcellularLocation>
        <location evidence="2">Virion</location>
    </subcellularLocation>
</comment>
<gene>
    <name type="ORF">EFP_031</name>
</gene>
<organismHost>
    <name type="scientific">Enterococcus faecalis</name>
    <name type="common">Streptococcus faecalis</name>
    <dbReference type="NCBI Taxonomy" id="1351"/>
</organismHost>
<name>VPN7_BPPHE</name>
<organism>
    <name type="scientific">Enterococcus phage phiEF24C</name>
    <name type="common">Enterococcus bacteriophage phi-EF24C</name>
    <dbReference type="NCBI Taxonomy" id="442493"/>
    <lineage>
        <taxon>Viruses</taxon>
        <taxon>Duplodnaviria</taxon>
        <taxon>Heunggongvirae</taxon>
        <taxon>Uroviricota</taxon>
        <taxon>Caudoviricetes</taxon>
        <taxon>Herelleviridae</taxon>
        <taxon>Brockvirinae</taxon>
        <taxon>Kochikohdavirus</taxon>
        <taxon>Kochikohdavirus EF24C</taxon>
    </lineage>
</organism>
<feature type="chain" id="PRO_0000419967" description="Tail fiber protein">
    <location>
        <begin position="1"/>
        <end position="1825"/>
    </location>
</feature>
<feature type="coiled-coil region" evidence="1">
    <location>
        <begin position="393"/>
        <end position="466"/>
    </location>
</feature>
<feature type="coiled-coil region" evidence="1">
    <location>
        <begin position="681"/>
        <end position="701"/>
    </location>
</feature>
<feature type="coiled-coil region" evidence="1">
    <location>
        <begin position="843"/>
        <end position="891"/>
    </location>
</feature>
<feature type="coiled-coil region" evidence="1">
    <location>
        <begin position="975"/>
        <end position="998"/>
    </location>
</feature>
<accession>A8E283</accession>
<keyword id="KW-0175">Coiled coil</keyword>
<keyword id="KW-0903">Direct protein sequencing</keyword>
<keyword id="KW-1185">Reference proteome</keyword>
<keyword id="KW-0946">Virion</keyword>
<dbReference type="EMBL" id="AP009390">
    <property type="protein sequence ID" value="BAF81299.1"/>
    <property type="molecule type" value="Genomic_DNA"/>
</dbReference>
<dbReference type="RefSeq" id="YP_001504140.1">
    <property type="nucleotide sequence ID" value="NC_009904.1"/>
</dbReference>
<dbReference type="KEGG" id="vg:5666347"/>
<dbReference type="Proteomes" id="UP000001151">
    <property type="component" value="Genome"/>
</dbReference>
<dbReference type="GO" id="GO:0098024">
    <property type="term" value="C:virus tail, fiber"/>
    <property type="evidence" value="ECO:0000314"/>
    <property type="project" value="UniProtKB"/>
</dbReference>
<dbReference type="Gene3D" id="2.60.120.260">
    <property type="entry name" value="Galactose-binding domain-like"/>
    <property type="match status" value="1"/>
</dbReference>
<sequence>MNKLVKRRFQAGLGSEIKRVYKEGQQINTLLLAQVIQVNYKYNTVDLLALQHKEVFQNSYANEGRFSARLPMEFGGRNIVGQPYGQVNPIAVGTVVLVGFINSDKDMPIVISVYNNNDVSKQLSRTQFSNSDPKDLELIGDMHQKFSLYPSLTYDSVDGEGGRVVTFSGKSFIAFDTKEVANSSTTDAGYGTKYEDLETSYYNNGDLIEPMKGRAPNVLFKHQGVLDDDGKPDLHDLLIHINPDGTYRTSMMNKEEDWRTLFEMTPDGRVKLRKQDSINIDGGIEISELGINNEGFVYLRNGDMDLEVRKDGIYSQGKLFTADVDLSDVYDKLNGLSIQIKETNGQLEIIANGVEEQNGKISELSTEITIVAGKVESKVTKTEVQDMIDSSFVDMSDAIKKAQEDADKANKVIADMSSDNRLTPSEKIDLLKEWDIIKNEYPSYLEQAETYEVDSKDYTAKYNSLELFVTPILADMESTSSVDGATLRKTFNSYYTARIALLNSISKKLKDGITEAMKKASQASLDATQAMADASQAKIDADNANKLISDIASDNKLTPSEKYQLKKEWDVIVKEYPTTIAQAEKYAVDTAEYTAKYKALELFVEPLFKDMDETSIVDGERLRATFSDYYASKIALLKEVTDSAKTELDAYGNKISVMETNITQTSEAITLLATRVQTVEDGVQSNKAQIEIQAEQISQKVTASEVKGIVDDSINNLTLGGTNLFVIKTQTAGLLNENDGTVGTAVDNSVVSDYIKVNQKTPYIATLYGNTGTNMIITDWYDKNRTFISGEAVADSGDFSKKYVSPENAVYARVSYKKANSVNIKFEAGTKATDYSPSWEDIKGDQTALEEYIKKVEEQAKKAQQDAENAKNDAENANNAIADMSNDNMLAPNEKKQILLQWEQIKTEYPINLDQATKFGVSSQQYTTAYNALDEYLKPILADMTTTSVVVGSTLRNTFNNYYDKRTTLLNRISDVAKNVADKAQETADTINDNLQNIGGYNYVGFSSGDNMLPRLMIKNVGYYTLGSSTTEFIDSMVAVKGDATTQPFDYTVGTSDKEIAGGGLADYRMKEVKEGQWLTASANVQVIDGGSARLAIYTLEGDNWVGSNSTPIQVSDGLKRVVAQRKVTGLTKGVLIRIESADTNVKEFRFGNVQLEVGIIPTPWKKSDIDIQEDINNVVQNIKTYTAWANDLQGLDFTREKVEGKTYMYVGTSMKDSDNYSDYTWRLTDEHIEGQINGKEGAWIYSPTAPTNPSQGLIWVDLSKVPNQPKRWVDSETGWVALTPEEVKDLPWGEDGTNLADWVAQAEQRISSDSIINTVLGSEDFTSVFDTKANTTDLDNLATYEDLDSIKEDYNRLIKEGINGIDFTPYVTNSELQQLKDSFNFSVQQAGGVNMLKNSLGFSGLDFWDGTVGKNLLPNSTWNLGFGRWGGASIASFEILPPEDDKPTSHILGSIGSRSSTKEIGNRPHPLKVNSGETYTISFDYKEEALAYDKDRPILVVRNYPDKDTDQWMEYSIEGWAVMANGSTTDLTVWRRFTKTFTIGTSGYLDILPKTIVESWTHRSFWRELKIEEGSQATTWVPNKEDGAFTGGIVETTQTEELANLGFGSGFVSSKRPSSSLTQSVELPEIGANLEYSLSFYMKVTTDNPVADFKCGIRVYEGDTLTYTLGIEDATQPIPLGFQQYKLVFTPTSTSTKIEMFVENGQEASVIISGIMYNIGNIPLKWQPYPSEIYNTNVKIDINGVTVKNNQTDGYTMITPQEFSGYSRIDGNIERIFTLNGQVTEVKMLKAEKRITMEPVSVFAMNTVTDTKRIRGWAFVPSFE</sequence>
<protein>
    <recommendedName>
        <fullName evidence="3 5">Tail fiber protein</fullName>
    </recommendedName>
</protein>
<reference evidence="5" key="1">
    <citation type="journal article" date="2008" name="Appl. Environ. Microbiol.">
        <title>In silico and in vivo evaluation of bacteriophage phiEF24C, a candidate for treatment of Enterococcus faecalis infections.</title>
        <authorList>
            <person name="Uchiyama J."/>
            <person name="Rashel M."/>
            <person name="Takemura I."/>
            <person name="Wakiguchi H."/>
            <person name="Matsuzaki S."/>
        </authorList>
    </citation>
    <scope>NUCLEOTIDE SEQUENCE [GENOMIC DNA]</scope>
    <source>
        <strain evidence="5">PhiEF24C</strain>
    </source>
</reference>
<reference evidence="4" key="2">
    <citation type="journal article" date="2011" name="PLoS ONE">
        <title>Improved adsorption of an Enterococcus faecalis bacteriophage PhiEF24C with a spontaneous point mutation.</title>
        <authorList>
            <person name="Uchiyama J."/>
            <person name="Takemura I."/>
            <person name="Satoh M."/>
            <person name="Kato S."/>
            <person name="Ujihara T."/>
            <person name="Akechi K."/>
            <person name="Matsuzaki S."/>
            <person name="Daibata M."/>
        </authorList>
    </citation>
    <scope>PROTEIN SEQUENCE OF 5-14</scope>
    <scope>FUNCTION</scope>
    <scope>SUBCELLULAR LOCATION</scope>
    <source>
        <strain evidence="2">phiEF24C</strain>
    </source>
</reference>
<proteinExistence type="evidence at protein level"/>
<evidence type="ECO:0000255" key="1"/>
<evidence type="ECO:0000269" key="2">
    <source>
    </source>
</evidence>
<evidence type="ECO:0000303" key="3">
    <source>
    </source>
</evidence>
<evidence type="ECO:0000305" key="4"/>
<evidence type="ECO:0000312" key="5">
    <source>
        <dbReference type="EMBL" id="BAF81299.1"/>
    </source>
</evidence>